<protein>
    <recommendedName>
        <fullName evidence="1">Acetyl-coenzyme A carboxylase carboxyl transferase subunit alpha</fullName>
        <shortName evidence="1">ACCase subunit alpha</shortName>
        <shortName evidence="1">Acetyl-CoA carboxylase carboxyltransferase subunit alpha</shortName>
        <ecNumber evidence="1">2.1.3.15</ecNumber>
    </recommendedName>
</protein>
<evidence type="ECO:0000255" key="1">
    <source>
        <dbReference type="HAMAP-Rule" id="MF_00823"/>
    </source>
</evidence>
<evidence type="ECO:0000255" key="2">
    <source>
        <dbReference type="PROSITE-ProRule" id="PRU01137"/>
    </source>
</evidence>
<sequence length="260" mass="28822">MSAYDKVMAARSKDRPTSKDYIKNIFTNFTEFHGDRRFGDDNAVVAGIGLLGNRPVTVIALEKGQDTKERLSRNFGSAHPEGYRKALRQMKLAEKFNRPVVCFIDTSGAYCGIGAEERGQGQAIAENLITMIDLKVPIISILIGEGGSGGALALAVADEVWMLENAIYSVISPEGCASILWKDSARVKEVAECLKLTADDLYSLGVTDMVIKENGGDFIRVYEDLSNKILHSINKYYEFSADKLVKMRFEKYQRLGMITQ</sequence>
<name>ACCA_RUMCH</name>
<gene>
    <name evidence="1" type="primary">accA</name>
    <name type="ordered locus">Ccel_0936</name>
</gene>
<reference key="1">
    <citation type="submission" date="2009-01" db="EMBL/GenBank/DDBJ databases">
        <title>Complete sequence of Clostridium cellulolyticum H10.</title>
        <authorList>
            <consortium name="US DOE Joint Genome Institute"/>
            <person name="Lucas S."/>
            <person name="Copeland A."/>
            <person name="Lapidus A."/>
            <person name="Glavina del Rio T."/>
            <person name="Dalin E."/>
            <person name="Tice H."/>
            <person name="Bruce D."/>
            <person name="Goodwin L."/>
            <person name="Pitluck S."/>
            <person name="Chertkov O."/>
            <person name="Saunders E."/>
            <person name="Brettin T."/>
            <person name="Detter J.C."/>
            <person name="Han C."/>
            <person name="Larimer F."/>
            <person name="Land M."/>
            <person name="Hauser L."/>
            <person name="Kyrpides N."/>
            <person name="Ivanova N."/>
            <person name="Zhou J."/>
            <person name="Richardson P."/>
        </authorList>
    </citation>
    <scope>NUCLEOTIDE SEQUENCE [LARGE SCALE GENOMIC DNA]</scope>
    <source>
        <strain>ATCC 35319 / DSM 5812 / JCM 6584 / H10</strain>
    </source>
</reference>
<organism>
    <name type="scientific">Ruminiclostridium cellulolyticum (strain ATCC 35319 / DSM 5812 / JCM 6584 / H10)</name>
    <name type="common">Clostridium cellulolyticum</name>
    <dbReference type="NCBI Taxonomy" id="394503"/>
    <lineage>
        <taxon>Bacteria</taxon>
        <taxon>Bacillati</taxon>
        <taxon>Bacillota</taxon>
        <taxon>Clostridia</taxon>
        <taxon>Eubacteriales</taxon>
        <taxon>Oscillospiraceae</taxon>
        <taxon>Ruminiclostridium</taxon>
    </lineage>
</organism>
<proteinExistence type="inferred from homology"/>
<feature type="chain" id="PRO_1000213123" description="Acetyl-coenzyme A carboxylase carboxyl transferase subunit alpha">
    <location>
        <begin position="1"/>
        <end position="260"/>
    </location>
</feature>
<feature type="domain" description="CoA carboxyltransferase C-terminal" evidence="2">
    <location>
        <begin position="1"/>
        <end position="235"/>
    </location>
</feature>
<keyword id="KW-0067">ATP-binding</keyword>
<keyword id="KW-0963">Cytoplasm</keyword>
<keyword id="KW-0275">Fatty acid biosynthesis</keyword>
<keyword id="KW-0276">Fatty acid metabolism</keyword>
<keyword id="KW-0444">Lipid biosynthesis</keyword>
<keyword id="KW-0443">Lipid metabolism</keyword>
<keyword id="KW-0547">Nucleotide-binding</keyword>
<keyword id="KW-1185">Reference proteome</keyword>
<keyword id="KW-0808">Transferase</keyword>
<dbReference type="EC" id="2.1.3.15" evidence="1"/>
<dbReference type="EMBL" id="CP001348">
    <property type="protein sequence ID" value="ACL75302.1"/>
    <property type="molecule type" value="Genomic_DNA"/>
</dbReference>
<dbReference type="RefSeq" id="WP_015924459.1">
    <property type="nucleotide sequence ID" value="NC_011898.1"/>
</dbReference>
<dbReference type="SMR" id="B8I942"/>
<dbReference type="STRING" id="394503.Ccel_0936"/>
<dbReference type="KEGG" id="cce:Ccel_0936"/>
<dbReference type="eggNOG" id="COG0825">
    <property type="taxonomic scope" value="Bacteria"/>
</dbReference>
<dbReference type="HOGENOM" id="CLU_015486_0_2_9"/>
<dbReference type="OrthoDB" id="9808023at2"/>
<dbReference type="UniPathway" id="UPA00655">
    <property type="reaction ID" value="UER00711"/>
</dbReference>
<dbReference type="Proteomes" id="UP000001349">
    <property type="component" value="Chromosome"/>
</dbReference>
<dbReference type="GO" id="GO:0009317">
    <property type="term" value="C:acetyl-CoA carboxylase complex"/>
    <property type="evidence" value="ECO:0007669"/>
    <property type="project" value="InterPro"/>
</dbReference>
<dbReference type="GO" id="GO:0003989">
    <property type="term" value="F:acetyl-CoA carboxylase activity"/>
    <property type="evidence" value="ECO:0007669"/>
    <property type="project" value="InterPro"/>
</dbReference>
<dbReference type="GO" id="GO:0005524">
    <property type="term" value="F:ATP binding"/>
    <property type="evidence" value="ECO:0007669"/>
    <property type="project" value="UniProtKB-KW"/>
</dbReference>
<dbReference type="GO" id="GO:0016743">
    <property type="term" value="F:carboxyl- or carbamoyltransferase activity"/>
    <property type="evidence" value="ECO:0007669"/>
    <property type="project" value="UniProtKB-UniRule"/>
</dbReference>
<dbReference type="GO" id="GO:0006633">
    <property type="term" value="P:fatty acid biosynthetic process"/>
    <property type="evidence" value="ECO:0007669"/>
    <property type="project" value="UniProtKB-KW"/>
</dbReference>
<dbReference type="GO" id="GO:2001295">
    <property type="term" value="P:malonyl-CoA biosynthetic process"/>
    <property type="evidence" value="ECO:0007669"/>
    <property type="project" value="UniProtKB-UniRule"/>
</dbReference>
<dbReference type="Gene3D" id="3.90.226.10">
    <property type="entry name" value="2-enoyl-CoA Hydratase, Chain A, domain 1"/>
    <property type="match status" value="1"/>
</dbReference>
<dbReference type="HAMAP" id="MF_00823">
    <property type="entry name" value="AcetylCoA_CT_alpha"/>
    <property type="match status" value="1"/>
</dbReference>
<dbReference type="InterPro" id="IPR001095">
    <property type="entry name" value="Acetyl_CoA_COase_a_su"/>
</dbReference>
<dbReference type="InterPro" id="IPR029045">
    <property type="entry name" value="ClpP/crotonase-like_dom_sf"/>
</dbReference>
<dbReference type="InterPro" id="IPR011763">
    <property type="entry name" value="COA_CT_C"/>
</dbReference>
<dbReference type="NCBIfam" id="TIGR00513">
    <property type="entry name" value="accA"/>
    <property type="match status" value="1"/>
</dbReference>
<dbReference type="NCBIfam" id="NF041504">
    <property type="entry name" value="AccA_sub"/>
    <property type="match status" value="1"/>
</dbReference>
<dbReference type="NCBIfam" id="NF004344">
    <property type="entry name" value="PRK05724.1"/>
    <property type="match status" value="1"/>
</dbReference>
<dbReference type="PANTHER" id="PTHR42853">
    <property type="entry name" value="ACETYL-COENZYME A CARBOXYLASE CARBOXYL TRANSFERASE SUBUNIT ALPHA"/>
    <property type="match status" value="1"/>
</dbReference>
<dbReference type="PANTHER" id="PTHR42853:SF3">
    <property type="entry name" value="ACETYL-COENZYME A CARBOXYLASE CARBOXYL TRANSFERASE SUBUNIT ALPHA, CHLOROPLASTIC"/>
    <property type="match status" value="1"/>
</dbReference>
<dbReference type="Pfam" id="PF03255">
    <property type="entry name" value="ACCA"/>
    <property type="match status" value="1"/>
</dbReference>
<dbReference type="PRINTS" id="PR01069">
    <property type="entry name" value="ACCCTRFRASEA"/>
</dbReference>
<dbReference type="SUPFAM" id="SSF52096">
    <property type="entry name" value="ClpP/crotonase"/>
    <property type="match status" value="1"/>
</dbReference>
<dbReference type="PROSITE" id="PS50989">
    <property type="entry name" value="COA_CT_CTER"/>
    <property type="match status" value="1"/>
</dbReference>
<comment type="function">
    <text evidence="1">Component of the acetyl coenzyme A carboxylase (ACC) complex. First, biotin carboxylase catalyzes the carboxylation of biotin on its carrier protein (BCCP) and then the CO(2) group is transferred by the carboxyltransferase to acetyl-CoA to form malonyl-CoA.</text>
</comment>
<comment type="catalytic activity">
    <reaction evidence="1">
        <text>N(6)-carboxybiotinyl-L-lysyl-[protein] + acetyl-CoA = N(6)-biotinyl-L-lysyl-[protein] + malonyl-CoA</text>
        <dbReference type="Rhea" id="RHEA:54728"/>
        <dbReference type="Rhea" id="RHEA-COMP:10505"/>
        <dbReference type="Rhea" id="RHEA-COMP:10506"/>
        <dbReference type="ChEBI" id="CHEBI:57288"/>
        <dbReference type="ChEBI" id="CHEBI:57384"/>
        <dbReference type="ChEBI" id="CHEBI:83144"/>
        <dbReference type="ChEBI" id="CHEBI:83145"/>
        <dbReference type="EC" id="2.1.3.15"/>
    </reaction>
</comment>
<comment type="pathway">
    <text evidence="1">Lipid metabolism; malonyl-CoA biosynthesis; malonyl-CoA from acetyl-CoA: step 1/1.</text>
</comment>
<comment type="subunit">
    <text evidence="1">Acetyl-CoA carboxylase is a heterohexamer composed of biotin carboxyl carrier protein (AccB), biotin carboxylase (AccC) and two subunits each of ACCase subunit alpha (AccA) and ACCase subunit beta (AccD).</text>
</comment>
<comment type="subcellular location">
    <subcellularLocation>
        <location evidence="1">Cytoplasm</location>
    </subcellularLocation>
</comment>
<comment type="similarity">
    <text evidence="1">Belongs to the AccA family.</text>
</comment>
<accession>B8I942</accession>